<proteinExistence type="inferred from homology"/>
<accession>B1KPH0</accession>
<comment type="function">
    <text evidence="1">Succinyl-CoA synthetase functions in the citric acid cycle (TCA), coupling the hydrolysis of succinyl-CoA to the synthesis of either ATP or GTP and thus represents the only step of substrate-level phosphorylation in the TCA. The beta subunit provides nucleotide specificity of the enzyme and binds the substrate succinate, while the binding sites for coenzyme A and phosphate are found in the alpha subunit.</text>
</comment>
<comment type="catalytic activity">
    <reaction evidence="1">
        <text>succinate + ATP + CoA = succinyl-CoA + ADP + phosphate</text>
        <dbReference type="Rhea" id="RHEA:17661"/>
        <dbReference type="ChEBI" id="CHEBI:30031"/>
        <dbReference type="ChEBI" id="CHEBI:30616"/>
        <dbReference type="ChEBI" id="CHEBI:43474"/>
        <dbReference type="ChEBI" id="CHEBI:57287"/>
        <dbReference type="ChEBI" id="CHEBI:57292"/>
        <dbReference type="ChEBI" id="CHEBI:456216"/>
        <dbReference type="EC" id="6.2.1.5"/>
    </reaction>
    <physiologicalReaction direction="right-to-left" evidence="1">
        <dbReference type="Rhea" id="RHEA:17663"/>
    </physiologicalReaction>
</comment>
<comment type="catalytic activity">
    <reaction evidence="1">
        <text>GTP + succinate + CoA = succinyl-CoA + GDP + phosphate</text>
        <dbReference type="Rhea" id="RHEA:22120"/>
        <dbReference type="ChEBI" id="CHEBI:30031"/>
        <dbReference type="ChEBI" id="CHEBI:37565"/>
        <dbReference type="ChEBI" id="CHEBI:43474"/>
        <dbReference type="ChEBI" id="CHEBI:57287"/>
        <dbReference type="ChEBI" id="CHEBI:57292"/>
        <dbReference type="ChEBI" id="CHEBI:58189"/>
    </reaction>
    <physiologicalReaction direction="right-to-left" evidence="1">
        <dbReference type="Rhea" id="RHEA:22122"/>
    </physiologicalReaction>
</comment>
<comment type="cofactor">
    <cofactor evidence="1">
        <name>Mg(2+)</name>
        <dbReference type="ChEBI" id="CHEBI:18420"/>
    </cofactor>
    <text evidence="1">Binds 1 Mg(2+) ion per subunit.</text>
</comment>
<comment type="pathway">
    <text evidence="1">Carbohydrate metabolism; tricarboxylic acid cycle; succinate from succinyl-CoA (ligase route): step 1/1.</text>
</comment>
<comment type="subunit">
    <text evidence="1">Heterotetramer of two alpha and two beta subunits.</text>
</comment>
<comment type="similarity">
    <text evidence="1">Belongs to the succinate/malate CoA ligase beta subunit family.</text>
</comment>
<dbReference type="EC" id="6.2.1.5" evidence="1"/>
<dbReference type="EMBL" id="CP000961">
    <property type="protein sequence ID" value="ACA86123.1"/>
    <property type="molecule type" value="Genomic_DNA"/>
</dbReference>
<dbReference type="RefSeq" id="WP_012324469.1">
    <property type="nucleotide sequence ID" value="NC_010506.1"/>
</dbReference>
<dbReference type="SMR" id="B1KPH0"/>
<dbReference type="STRING" id="392500.Swoo_1839"/>
<dbReference type="KEGG" id="swd:Swoo_1839"/>
<dbReference type="eggNOG" id="COG0045">
    <property type="taxonomic scope" value="Bacteria"/>
</dbReference>
<dbReference type="HOGENOM" id="CLU_037430_0_2_6"/>
<dbReference type="UniPathway" id="UPA00223">
    <property type="reaction ID" value="UER00999"/>
</dbReference>
<dbReference type="Proteomes" id="UP000002168">
    <property type="component" value="Chromosome"/>
</dbReference>
<dbReference type="GO" id="GO:0005829">
    <property type="term" value="C:cytosol"/>
    <property type="evidence" value="ECO:0007669"/>
    <property type="project" value="TreeGrafter"/>
</dbReference>
<dbReference type="GO" id="GO:0042709">
    <property type="term" value="C:succinate-CoA ligase complex"/>
    <property type="evidence" value="ECO:0007669"/>
    <property type="project" value="TreeGrafter"/>
</dbReference>
<dbReference type="GO" id="GO:0005524">
    <property type="term" value="F:ATP binding"/>
    <property type="evidence" value="ECO:0007669"/>
    <property type="project" value="UniProtKB-UniRule"/>
</dbReference>
<dbReference type="GO" id="GO:0000287">
    <property type="term" value="F:magnesium ion binding"/>
    <property type="evidence" value="ECO:0007669"/>
    <property type="project" value="UniProtKB-UniRule"/>
</dbReference>
<dbReference type="GO" id="GO:0004775">
    <property type="term" value="F:succinate-CoA ligase (ADP-forming) activity"/>
    <property type="evidence" value="ECO:0007669"/>
    <property type="project" value="UniProtKB-UniRule"/>
</dbReference>
<dbReference type="GO" id="GO:0004776">
    <property type="term" value="F:succinate-CoA ligase (GDP-forming) activity"/>
    <property type="evidence" value="ECO:0007669"/>
    <property type="project" value="RHEA"/>
</dbReference>
<dbReference type="GO" id="GO:0006104">
    <property type="term" value="P:succinyl-CoA metabolic process"/>
    <property type="evidence" value="ECO:0007669"/>
    <property type="project" value="TreeGrafter"/>
</dbReference>
<dbReference type="GO" id="GO:0006099">
    <property type="term" value="P:tricarboxylic acid cycle"/>
    <property type="evidence" value="ECO:0007669"/>
    <property type="project" value="UniProtKB-UniRule"/>
</dbReference>
<dbReference type="FunFam" id="3.30.1490.20:FF:000002">
    <property type="entry name" value="Succinate--CoA ligase [ADP-forming] subunit beta"/>
    <property type="match status" value="1"/>
</dbReference>
<dbReference type="FunFam" id="3.30.470.20:FF:000002">
    <property type="entry name" value="Succinate--CoA ligase [ADP-forming] subunit beta"/>
    <property type="match status" value="1"/>
</dbReference>
<dbReference type="FunFam" id="3.40.50.261:FF:000001">
    <property type="entry name" value="Succinate--CoA ligase [ADP-forming] subunit beta"/>
    <property type="match status" value="1"/>
</dbReference>
<dbReference type="Gene3D" id="3.30.1490.20">
    <property type="entry name" value="ATP-grasp fold, A domain"/>
    <property type="match status" value="1"/>
</dbReference>
<dbReference type="Gene3D" id="3.30.470.20">
    <property type="entry name" value="ATP-grasp fold, B domain"/>
    <property type="match status" value="1"/>
</dbReference>
<dbReference type="Gene3D" id="3.40.50.261">
    <property type="entry name" value="Succinyl-CoA synthetase domains"/>
    <property type="match status" value="1"/>
</dbReference>
<dbReference type="HAMAP" id="MF_00558">
    <property type="entry name" value="Succ_CoA_beta"/>
    <property type="match status" value="1"/>
</dbReference>
<dbReference type="InterPro" id="IPR011761">
    <property type="entry name" value="ATP-grasp"/>
</dbReference>
<dbReference type="InterPro" id="IPR013650">
    <property type="entry name" value="ATP-grasp_succ-CoA_synth-type"/>
</dbReference>
<dbReference type="InterPro" id="IPR013815">
    <property type="entry name" value="ATP_grasp_subdomain_1"/>
</dbReference>
<dbReference type="InterPro" id="IPR017866">
    <property type="entry name" value="Succ-CoA_synthase_bsu_CS"/>
</dbReference>
<dbReference type="InterPro" id="IPR005811">
    <property type="entry name" value="SUCC_ACL_C"/>
</dbReference>
<dbReference type="InterPro" id="IPR005809">
    <property type="entry name" value="Succ_CoA_ligase-like_bsu"/>
</dbReference>
<dbReference type="InterPro" id="IPR016102">
    <property type="entry name" value="Succinyl-CoA_synth-like"/>
</dbReference>
<dbReference type="NCBIfam" id="NF001913">
    <property type="entry name" value="PRK00696.1"/>
    <property type="match status" value="1"/>
</dbReference>
<dbReference type="NCBIfam" id="TIGR01016">
    <property type="entry name" value="sucCoAbeta"/>
    <property type="match status" value="1"/>
</dbReference>
<dbReference type="PANTHER" id="PTHR11815:SF10">
    <property type="entry name" value="SUCCINATE--COA LIGASE [GDP-FORMING] SUBUNIT BETA, MITOCHONDRIAL"/>
    <property type="match status" value="1"/>
</dbReference>
<dbReference type="PANTHER" id="PTHR11815">
    <property type="entry name" value="SUCCINYL-COA SYNTHETASE BETA CHAIN"/>
    <property type="match status" value="1"/>
</dbReference>
<dbReference type="Pfam" id="PF08442">
    <property type="entry name" value="ATP-grasp_2"/>
    <property type="match status" value="1"/>
</dbReference>
<dbReference type="Pfam" id="PF00549">
    <property type="entry name" value="Ligase_CoA"/>
    <property type="match status" value="1"/>
</dbReference>
<dbReference type="PIRSF" id="PIRSF001554">
    <property type="entry name" value="SucCS_beta"/>
    <property type="match status" value="1"/>
</dbReference>
<dbReference type="SUPFAM" id="SSF56059">
    <property type="entry name" value="Glutathione synthetase ATP-binding domain-like"/>
    <property type="match status" value="1"/>
</dbReference>
<dbReference type="SUPFAM" id="SSF52210">
    <property type="entry name" value="Succinyl-CoA synthetase domains"/>
    <property type="match status" value="1"/>
</dbReference>
<dbReference type="PROSITE" id="PS50975">
    <property type="entry name" value="ATP_GRASP"/>
    <property type="match status" value="1"/>
</dbReference>
<dbReference type="PROSITE" id="PS01217">
    <property type="entry name" value="SUCCINYL_COA_LIG_3"/>
    <property type="match status" value="1"/>
</dbReference>
<keyword id="KW-0067">ATP-binding</keyword>
<keyword id="KW-0436">Ligase</keyword>
<keyword id="KW-0460">Magnesium</keyword>
<keyword id="KW-0479">Metal-binding</keyword>
<keyword id="KW-0547">Nucleotide-binding</keyword>
<keyword id="KW-1185">Reference proteome</keyword>
<keyword id="KW-0816">Tricarboxylic acid cycle</keyword>
<sequence length="388" mass="41436">MNLHEYQAKSLFAEYGLPVSEGFACDTAQEAVEAAGHIGGDMWVVKCQVHAGGRGKAGGVKVTGDKNEIRAFAEHWLGKNLVTYQTDEKGQPVAKILVESCTDIANELYLGAVVDRASRRVVFMASTEGGVEIETVAEETPELIHKAIIDPLAGPQPYQARDLGFKLGLNPTQLKQFTKVFMGLAKMFEDHDFALLEINPLVITDEGNIHCLDGKIGIDGNALYRQPKIREMHDPSQDDAREAHAAKFELNYVALDGNVGCMVNGAGLAMGTMDIVNLHGGKPANFLDVGGGATKERVAEAFKIILSDDNVKAVLVNIFGGIVRCDMIAEGIIGAVKEVGVTVPVVVRLEGTNADLGREVLANSDLDIIAATSLTDAAEQVVKAAEGK</sequence>
<feature type="chain" id="PRO_1000129229" description="Succinate--CoA ligase [ADP-forming] subunit beta">
    <location>
        <begin position="1"/>
        <end position="388"/>
    </location>
</feature>
<feature type="domain" description="ATP-grasp" evidence="1">
    <location>
        <begin position="9"/>
        <end position="244"/>
    </location>
</feature>
<feature type="binding site" evidence="1">
    <location>
        <position position="46"/>
    </location>
    <ligand>
        <name>ATP</name>
        <dbReference type="ChEBI" id="CHEBI:30616"/>
    </ligand>
</feature>
<feature type="binding site" evidence="1">
    <location>
        <begin position="53"/>
        <end position="55"/>
    </location>
    <ligand>
        <name>ATP</name>
        <dbReference type="ChEBI" id="CHEBI:30616"/>
    </ligand>
</feature>
<feature type="binding site" evidence="1">
    <location>
        <position position="99"/>
    </location>
    <ligand>
        <name>ATP</name>
        <dbReference type="ChEBI" id="CHEBI:30616"/>
    </ligand>
</feature>
<feature type="binding site" evidence="1">
    <location>
        <position position="102"/>
    </location>
    <ligand>
        <name>ATP</name>
        <dbReference type="ChEBI" id="CHEBI:30616"/>
    </ligand>
</feature>
<feature type="binding site" evidence="1">
    <location>
        <position position="107"/>
    </location>
    <ligand>
        <name>ATP</name>
        <dbReference type="ChEBI" id="CHEBI:30616"/>
    </ligand>
</feature>
<feature type="binding site" evidence="1">
    <location>
        <position position="199"/>
    </location>
    <ligand>
        <name>Mg(2+)</name>
        <dbReference type="ChEBI" id="CHEBI:18420"/>
    </ligand>
</feature>
<feature type="binding site" evidence="1">
    <location>
        <position position="213"/>
    </location>
    <ligand>
        <name>Mg(2+)</name>
        <dbReference type="ChEBI" id="CHEBI:18420"/>
    </ligand>
</feature>
<feature type="binding site" evidence="1">
    <location>
        <position position="264"/>
    </location>
    <ligand>
        <name>substrate</name>
        <note>ligand shared with subunit alpha</note>
    </ligand>
</feature>
<feature type="binding site" evidence="1">
    <location>
        <begin position="321"/>
        <end position="323"/>
    </location>
    <ligand>
        <name>substrate</name>
        <note>ligand shared with subunit alpha</note>
    </ligand>
</feature>
<evidence type="ECO:0000255" key="1">
    <source>
        <dbReference type="HAMAP-Rule" id="MF_00558"/>
    </source>
</evidence>
<protein>
    <recommendedName>
        <fullName evidence="1">Succinate--CoA ligase [ADP-forming] subunit beta</fullName>
        <ecNumber evidence="1">6.2.1.5</ecNumber>
    </recommendedName>
    <alternativeName>
        <fullName evidence="1">Succinyl-CoA synthetase subunit beta</fullName>
        <shortName evidence="1">SCS-beta</shortName>
    </alternativeName>
</protein>
<reference key="1">
    <citation type="submission" date="2008-02" db="EMBL/GenBank/DDBJ databases">
        <title>Complete sequence of Shewanella woodyi ATCC 51908.</title>
        <authorList>
            <consortium name="US DOE Joint Genome Institute"/>
            <person name="Copeland A."/>
            <person name="Lucas S."/>
            <person name="Lapidus A."/>
            <person name="Glavina del Rio T."/>
            <person name="Dalin E."/>
            <person name="Tice H."/>
            <person name="Bruce D."/>
            <person name="Goodwin L."/>
            <person name="Pitluck S."/>
            <person name="Sims D."/>
            <person name="Brettin T."/>
            <person name="Detter J.C."/>
            <person name="Han C."/>
            <person name="Kuske C.R."/>
            <person name="Schmutz J."/>
            <person name="Larimer F."/>
            <person name="Land M."/>
            <person name="Hauser L."/>
            <person name="Kyrpides N."/>
            <person name="Lykidis A."/>
            <person name="Zhao J.-S."/>
            <person name="Richardson P."/>
        </authorList>
    </citation>
    <scope>NUCLEOTIDE SEQUENCE [LARGE SCALE GENOMIC DNA]</scope>
    <source>
        <strain>ATCC 51908 / MS32</strain>
    </source>
</reference>
<name>SUCC_SHEWM</name>
<gene>
    <name evidence="1" type="primary">sucC</name>
    <name type="ordered locus">Swoo_1839</name>
</gene>
<organism>
    <name type="scientific">Shewanella woodyi (strain ATCC 51908 / MS32)</name>
    <dbReference type="NCBI Taxonomy" id="392500"/>
    <lineage>
        <taxon>Bacteria</taxon>
        <taxon>Pseudomonadati</taxon>
        <taxon>Pseudomonadota</taxon>
        <taxon>Gammaproteobacteria</taxon>
        <taxon>Alteromonadales</taxon>
        <taxon>Shewanellaceae</taxon>
        <taxon>Shewanella</taxon>
    </lineage>
</organism>